<reference key="1">
    <citation type="journal article" date="2011" name="J. Bacteriol.">
        <title>Genome sequence of lineage III Listeria monocytogenes strain HCC23.</title>
        <authorList>
            <person name="Steele C.L."/>
            <person name="Donaldson J.R."/>
            <person name="Paul D."/>
            <person name="Banes M.M."/>
            <person name="Arick T."/>
            <person name="Bridges S.M."/>
            <person name="Lawrence M.L."/>
        </authorList>
    </citation>
    <scope>NUCLEOTIDE SEQUENCE [LARGE SCALE GENOMIC DNA]</scope>
    <source>
        <strain>HCC23</strain>
    </source>
</reference>
<comment type="function">
    <text evidence="1">Phosphorylation of dTMP to form dTDP in both de novo and salvage pathways of dTTP synthesis.</text>
</comment>
<comment type="catalytic activity">
    <reaction evidence="1">
        <text>dTMP + ATP = dTDP + ADP</text>
        <dbReference type="Rhea" id="RHEA:13517"/>
        <dbReference type="ChEBI" id="CHEBI:30616"/>
        <dbReference type="ChEBI" id="CHEBI:58369"/>
        <dbReference type="ChEBI" id="CHEBI:63528"/>
        <dbReference type="ChEBI" id="CHEBI:456216"/>
        <dbReference type="EC" id="2.7.4.9"/>
    </reaction>
</comment>
<comment type="similarity">
    <text evidence="1">Belongs to the thymidylate kinase family.</text>
</comment>
<name>KTHY_LISMH</name>
<protein>
    <recommendedName>
        <fullName evidence="1">Thymidylate kinase</fullName>
        <ecNumber evidence="1">2.7.4.9</ecNumber>
    </recommendedName>
    <alternativeName>
        <fullName evidence="1">dTMP kinase</fullName>
    </alternativeName>
</protein>
<organism>
    <name type="scientific">Listeria monocytogenes serotype 4a (strain HCC23)</name>
    <dbReference type="NCBI Taxonomy" id="552536"/>
    <lineage>
        <taxon>Bacteria</taxon>
        <taxon>Bacillati</taxon>
        <taxon>Bacillota</taxon>
        <taxon>Bacilli</taxon>
        <taxon>Bacillales</taxon>
        <taxon>Listeriaceae</taxon>
        <taxon>Listeria</taxon>
    </lineage>
</organism>
<accession>B8DAU8</accession>
<feature type="chain" id="PRO_1000123581" description="Thymidylate kinase">
    <location>
        <begin position="1"/>
        <end position="208"/>
    </location>
</feature>
<feature type="binding site" evidence="1">
    <location>
        <begin position="10"/>
        <end position="17"/>
    </location>
    <ligand>
        <name>ATP</name>
        <dbReference type="ChEBI" id="CHEBI:30616"/>
    </ligand>
</feature>
<sequence length="208" mass="23127">MKAIFITLEGPDGSGKTTVGTLLNQKMTEAGIDFIKTREPGGSPISEKVRNIVLGIGNEEMDPKTEVLLIAGARRQHVVETIRPALAVGKTVLCDRFMDSSLAYQGAGRDMDMEQVLQVNLYAIEDTLPDRTYYLDVPAEVGLARIAANKGREVNRLDKEDITYHEKVQAGYEKVINMFPERFMRVDATKTPEEITETILADILRQLA</sequence>
<dbReference type="EC" id="2.7.4.9" evidence="1"/>
<dbReference type="EMBL" id="CP001175">
    <property type="protein sequence ID" value="ACK41173.1"/>
    <property type="molecule type" value="Genomic_DNA"/>
</dbReference>
<dbReference type="RefSeq" id="WP_012582338.1">
    <property type="nucleotide sequence ID" value="NC_011660.1"/>
</dbReference>
<dbReference type="SMR" id="B8DAU8"/>
<dbReference type="KEGG" id="lmh:LMHCC_2842"/>
<dbReference type="HOGENOM" id="CLU_049131_0_2_9"/>
<dbReference type="GO" id="GO:0005829">
    <property type="term" value="C:cytosol"/>
    <property type="evidence" value="ECO:0007669"/>
    <property type="project" value="TreeGrafter"/>
</dbReference>
<dbReference type="GO" id="GO:0005524">
    <property type="term" value="F:ATP binding"/>
    <property type="evidence" value="ECO:0007669"/>
    <property type="project" value="UniProtKB-UniRule"/>
</dbReference>
<dbReference type="GO" id="GO:0004798">
    <property type="term" value="F:dTMP kinase activity"/>
    <property type="evidence" value="ECO:0007669"/>
    <property type="project" value="UniProtKB-UniRule"/>
</dbReference>
<dbReference type="GO" id="GO:0006233">
    <property type="term" value="P:dTDP biosynthetic process"/>
    <property type="evidence" value="ECO:0007669"/>
    <property type="project" value="InterPro"/>
</dbReference>
<dbReference type="GO" id="GO:0006235">
    <property type="term" value="P:dTTP biosynthetic process"/>
    <property type="evidence" value="ECO:0007669"/>
    <property type="project" value="UniProtKB-UniRule"/>
</dbReference>
<dbReference type="GO" id="GO:0006227">
    <property type="term" value="P:dUDP biosynthetic process"/>
    <property type="evidence" value="ECO:0007669"/>
    <property type="project" value="TreeGrafter"/>
</dbReference>
<dbReference type="CDD" id="cd01672">
    <property type="entry name" value="TMPK"/>
    <property type="match status" value="1"/>
</dbReference>
<dbReference type="FunFam" id="3.40.50.300:FF:000225">
    <property type="entry name" value="Thymidylate kinase"/>
    <property type="match status" value="1"/>
</dbReference>
<dbReference type="Gene3D" id="3.40.50.300">
    <property type="entry name" value="P-loop containing nucleotide triphosphate hydrolases"/>
    <property type="match status" value="1"/>
</dbReference>
<dbReference type="HAMAP" id="MF_00165">
    <property type="entry name" value="Thymidylate_kinase"/>
    <property type="match status" value="1"/>
</dbReference>
<dbReference type="InterPro" id="IPR027417">
    <property type="entry name" value="P-loop_NTPase"/>
</dbReference>
<dbReference type="InterPro" id="IPR039430">
    <property type="entry name" value="Thymidylate_kin-like_dom"/>
</dbReference>
<dbReference type="InterPro" id="IPR018095">
    <property type="entry name" value="Thymidylate_kin_CS"/>
</dbReference>
<dbReference type="InterPro" id="IPR018094">
    <property type="entry name" value="Thymidylate_kinase"/>
</dbReference>
<dbReference type="NCBIfam" id="TIGR00041">
    <property type="entry name" value="DTMP_kinase"/>
    <property type="match status" value="1"/>
</dbReference>
<dbReference type="PANTHER" id="PTHR10344">
    <property type="entry name" value="THYMIDYLATE KINASE"/>
    <property type="match status" value="1"/>
</dbReference>
<dbReference type="PANTHER" id="PTHR10344:SF4">
    <property type="entry name" value="UMP-CMP KINASE 2, MITOCHONDRIAL"/>
    <property type="match status" value="1"/>
</dbReference>
<dbReference type="Pfam" id="PF02223">
    <property type="entry name" value="Thymidylate_kin"/>
    <property type="match status" value="1"/>
</dbReference>
<dbReference type="SUPFAM" id="SSF52540">
    <property type="entry name" value="P-loop containing nucleoside triphosphate hydrolases"/>
    <property type="match status" value="1"/>
</dbReference>
<dbReference type="PROSITE" id="PS01331">
    <property type="entry name" value="THYMIDYLATE_KINASE"/>
    <property type="match status" value="1"/>
</dbReference>
<gene>
    <name evidence="1" type="primary">tmk</name>
    <name type="ordered locus">LMHCC_2842</name>
</gene>
<keyword id="KW-0067">ATP-binding</keyword>
<keyword id="KW-0418">Kinase</keyword>
<keyword id="KW-0545">Nucleotide biosynthesis</keyword>
<keyword id="KW-0547">Nucleotide-binding</keyword>
<keyword id="KW-0808">Transferase</keyword>
<evidence type="ECO:0000255" key="1">
    <source>
        <dbReference type="HAMAP-Rule" id="MF_00165"/>
    </source>
</evidence>
<proteinExistence type="inferred from homology"/>